<dbReference type="EMBL" id="CP000036">
    <property type="protein sequence ID" value="ABB64874.1"/>
    <property type="molecule type" value="Genomic_DNA"/>
</dbReference>
<dbReference type="RefSeq" id="WP_000845382.1">
    <property type="nucleotide sequence ID" value="NC_007613.1"/>
</dbReference>
<dbReference type="SMR" id="Q325Y4"/>
<dbReference type="KEGG" id="sbo:SBO_0144"/>
<dbReference type="HOGENOM" id="CLU_015263_7_0_6"/>
<dbReference type="Proteomes" id="UP000007067">
    <property type="component" value="Chromosome"/>
</dbReference>
<dbReference type="GO" id="GO:0005886">
    <property type="term" value="C:plasma membrane"/>
    <property type="evidence" value="ECO:0007669"/>
    <property type="project" value="UniProtKB-SubCell"/>
</dbReference>
<dbReference type="GO" id="GO:0015297">
    <property type="term" value="F:antiporter activity"/>
    <property type="evidence" value="ECO:0007669"/>
    <property type="project" value="UniProtKB-UniRule"/>
</dbReference>
<dbReference type="GO" id="GO:0005247">
    <property type="term" value="F:voltage-gated chloride channel activity"/>
    <property type="evidence" value="ECO:0007669"/>
    <property type="project" value="TreeGrafter"/>
</dbReference>
<dbReference type="CDD" id="cd01031">
    <property type="entry name" value="EriC"/>
    <property type="match status" value="1"/>
</dbReference>
<dbReference type="FunFam" id="1.10.3080.10:FF:000005">
    <property type="entry name" value="H(+)/Cl(-) exchange transporter ClcA"/>
    <property type="match status" value="1"/>
</dbReference>
<dbReference type="Gene3D" id="1.10.3080.10">
    <property type="entry name" value="Clc chloride channel"/>
    <property type="match status" value="1"/>
</dbReference>
<dbReference type="HAMAP" id="MF_01128">
    <property type="entry name" value="CLC_ClcA"/>
    <property type="match status" value="1"/>
</dbReference>
<dbReference type="InterPro" id="IPR023861">
    <property type="entry name" value="Cl-channel_ClcA"/>
</dbReference>
<dbReference type="InterPro" id="IPR014743">
    <property type="entry name" value="Cl-channel_core"/>
</dbReference>
<dbReference type="InterPro" id="IPR001807">
    <property type="entry name" value="ClC"/>
</dbReference>
<dbReference type="NCBIfam" id="NF003640">
    <property type="entry name" value="PRK05277.1"/>
    <property type="match status" value="1"/>
</dbReference>
<dbReference type="PANTHER" id="PTHR45711">
    <property type="entry name" value="CHLORIDE CHANNEL PROTEIN"/>
    <property type="match status" value="1"/>
</dbReference>
<dbReference type="PANTHER" id="PTHR45711:SF6">
    <property type="entry name" value="CHLORIDE CHANNEL PROTEIN"/>
    <property type="match status" value="1"/>
</dbReference>
<dbReference type="Pfam" id="PF00654">
    <property type="entry name" value="Voltage_CLC"/>
    <property type="match status" value="1"/>
</dbReference>
<dbReference type="PRINTS" id="PR00762">
    <property type="entry name" value="CLCHANNEL"/>
</dbReference>
<dbReference type="SUPFAM" id="SSF81340">
    <property type="entry name" value="Clc chloride channel"/>
    <property type="match status" value="1"/>
</dbReference>
<name>CLCA_SHIBS</name>
<gene>
    <name evidence="1" type="primary">clcA</name>
    <name evidence="1" type="synonym">eriC</name>
    <name type="ordered locus">SBO_0144</name>
</gene>
<keyword id="KW-0050">Antiport</keyword>
<keyword id="KW-0997">Cell inner membrane</keyword>
<keyword id="KW-1003">Cell membrane</keyword>
<keyword id="KW-0868">Chloride</keyword>
<keyword id="KW-0406">Ion transport</keyword>
<keyword id="KW-0472">Membrane</keyword>
<keyword id="KW-0812">Transmembrane</keyword>
<keyword id="KW-1133">Transmembrane helix</keyword>
<keyword id="KW-0813">Transport</keyword>
<accession>Q325Y4</accession>
<feature type="chain" id="PRO_0000301542" description="H(+)/Cl(-) exchange transporter ClcA">
    <location>
        <begin position="1"/>
        <end position="473"/>
    </location>
</feature>
<feature type="topological domain" description="Cytoplasmic" evidence="1">
    <location>
        <begin position="1"/>
        <end position="32"/>
    </location>
</feature>
<feature type="transmembrane region" description="Helical" evidence="1">
    <location>
        <begin position="33"/>
        <end position="69"/>
    </location>
</feature>
<feature type="topological domain" description="Periplasmic" evidence="1">
    <location>
        <begin position="70"/>
        <end position="76"/>
    </location>
</feature>
<feature type="transmembrane region" description="Helical" evidence="1">
    <location>
        <begin position="77"/>
        <end position="100"/>
    </location>
</feature>
<feature type="intramembrane region" description="Helical" evidence="1">
    <location>
        <begin position="109"/>
        <end position="116"/>
    </location>
</feature>
<feature type="topological domain" description="Cytoplasmic" evidence="1">
    <location>
        <begin position="117"/>
        <end position="123"/>
    </location>
</feature>
<feature type="transmembrane region" description="Helical" evidence="1">
    <location>
        <begin position="124"/>
        <end position="141"/>
    </location>
</feature>
<feature type="transmembrane region" description="Helical" evidence="1">
    <location>
        <begin position="148"/>
        <end position="166"/>
    </location>
</feature>
<feature type="topological domain" description="Cytoplasmic" evidence="1">
    <location>
        <begin position="167"/>
        <end position="176"/>
    </location>
</feature>
<feature type="intramembrane region" description="Helical" evidence="1">
    <location>
        <begin position="177"/>
        <end position="189"/>
    </location>
</feature>
<feature type="intramembrane region" description="Helical" evidence="1">
    <location>
        <begin position="193"/>
        <end position="201"/>
    </location>
</feature>
<feature type="topological domain" description="Cytoplasmic" evidence="1">
    <location>
        <begin position="202"/>
        <end position="214"/>
    </location>
</feature>
<feature type="transmembrane region" description="Helical" evidence="1">
    <location>
        <begin position="215"/>
        <end position="232"/>
    </location>
</feature>
<feature type="topological domain" description="Periplasmic" evidence="1">
    <location>
        <begin position="233"/>
        <end position="252"/>
    </location>
</feature>
<feature type="transmembrane region" description="Helical" evidence="1">
    <location>
        <begin position="253"/>
        <end position="281"/>
    </location>
</feature>
<feature type="topological domain" description="Cytoplasmic" evidence="1">
    <location>
        <begin position="282"/>
        <end position="287"/>
    </location>
</feature>
<feature type="transmembrane region" description="Helical" evidence="1">
    <location>
        <begin position="288"/>
        <end position="309"/>
    </location>
</feature>
<feature type="topological domain" description="Periplasmic" evidence="1">
    <location>
        <begin position="310"/>
        <end position="329"/>
    </location>
</feature>
<feature type="transmembrane region" description="Helical" evidence="1">
    <location>
        <begin position="330"/>
        <end position="349"/>
    </location>
</feature>
<feature type="transmembrane region" description="Helical" evidence="1">
    <location>
        <begin position="355"/>
        <end position="376"/>
    </location>
</feature>
<feature type="topological domain" description="Periplasmic" evidence="1">
    <location>
        <begin position="377"/>
        <end position="386"/>
    </location>
</feature>
<feature type="intramembrane region" description="Helical" evidence="1">
    <location>
        <begin position="387"/>
        <end position="401"/>
    </location>
</feature>
<feature type="intramembrane region" description="Note=Loop between two helices" evidence="1">
    <location>
        <begin position="402"/>
        <end position="404"/>
    </location>
</feature>
<feature type="intramembrane region" description="Helical" evidence="1">
    <location>
        <begin position="405"/>
        <end position="416"/>
    </location>
</feature>
<feature type="intramembrane region" description="Note=Loop between two helices" evidence="1">
    <location>
        <begin position="417"/>
        <end position="421"/>
    </location>
</feature>
<feature type="transmembrane region" description="Helical" evidence="1">
    <location>
        <begin position="422"/>
        <end position="438"/>
    </location>
</feature>
<feature type="topological domain" description="Cytoplasmic" evidence="1">
    <location>
        <begin position="439"/>
        <end position="473"/>
    </location>
</feature>
<feature type="short sequence motif" description="Selectivity filter part_1" evidence="1">
    <location>
        <begin position="106"/>
        <end position="110"/>
    </location>
</feature>
<feature type="short sequence motif" description="Selectivity filter part_2" evidence="1">
    <location>
        <begin position="146"/>
        <end position="150"/>
    </location>
</feature>
<feature type="short sequence motif" description="Selectivity filter part_3" evidence="1">
    <location>
        <begin position="355"/>
        <end position="359"/>
    </location>
</feature>
<feature type="binding site" evidence="1">
    <location>
        <position position="107"/>
    </location>
    <ligand>
        <name>chloride</name>
        <dbReference type="ChEBI" id="CHEBI:17996"/>
    </ligand>
</feature>
<feature type="binding site" evidence="1">
    <location>
        <position position="356"/>
    </location>
    <ligand>
        <name>chloride</name>
        <dbReference type="ChEBI" id="CHEBI:17996"/>
    </ligand>
</feature>
<feature type="binding site" evidence="1">
    <location>
        <position position="357"/>
    </location>
    <ligand>
        <name>chloride</name>
        <dbReference type="ChEBI" id="CHEBI:17996"/>
    </ligand>
</feature>
<feature type="binding site" evidence="1">
    <location>
        <position position="445"/>
    </location>
    <ligand>
        <name>chloride</name>
        <dbReference type="ChEBI" id="CHEBI:17996"/>
    </ligand>
</feature>
<feature type="site" description="Mediates proton transfer from the outer aqueous phase to the interior of the protein; involved in linking H(+) and Cl(-) transport" evidence="1">
    <location>
        <position position="148"/>
    </location>
</feature>
<feature type="site" description="Mediates proton transfer from the protein to the inner aqueous phase" evidence="1">
    <location>
        <position position="203"/>
    </location>
</feature>
<proteinExistence type="inferred from homology"/>
<sequence length="473" mass="50507">MKTDTPSLETPQAARLRRRQLIRQLLERDKTPLAILFMAAVVGTLVGLAAVAFDKGVAWLQNQRMEALVHTADNYPLLLTVAFLCSAVLAMFGYFLVRKYAPEAGGSGIPEIEGALEDQRPVRWWRVLPVKFFGGLGTLGGGMVLGREGPTVQIGGNIGRMVLDIFRLKGDEARHTLLATGAAAGLAAAFNAPLAGILFIIEEMRPQFRYTLISIKAVFIGVIMSTIMYRIFNHEVALIDVGKLSDAPLNTLWLYLILGIIFGIFGPIFNKWVLGMQDLLHRVHGGNITKWVLMGGAIGGLCGLLGFVAPATSGGGFNLIPIATAGNFSMGMLVFIFVARVITTLLCFSSGAPGGIFAPMLALGTVLGTAFGMVVVELFPQYHLEAGTFAIAGMGALLAASIRAPLTGIILVLEMTDNYQLILPMIITGLGATLLAQFTGGKPLYSEILARTLAKQEAEQLARSKAASASENT</sequence>
<organism>
    <name type="scientific">Shigella boydii serotype 4 (strain Sb227)</name>
    <dbReference type="NCBI Taxonomy" id="300268"/>
    <lineage>
        <taxon>Bacteria</taxon>
        <taxon>Pseudomonadati</taxon>
        <taxon>Pseudomonadota</taxon>
        <taxon>Gammaproteobacteria</taxon>
        <taxon>Enterobacterales</taxon>
        <taxon>Enterobacteriaceae</taxon>
        <taxon>Shigella</taxon>
    </lineage>
</organism>
<comment type="function">
    <text evidence="1">Proton-coupled chloride transporter. Functions as antiport system and exchanges two chloride ions for 1 proton. Probably acts as an electrical shunt for an outwardly-directed proton pump that is linked to amino acid decarboxylation, as part of the extreme acid resistance (XAR) response.</text>
</comment>
<comment type="catalytic activity">
    <reaction evidence="1">
        <text>2 chloride(in) + H(+)(out) = 2 chloride(out) + H(+)(in)</text>
        <dbReference type="Rhea" id="RHEA:29567"/>
        <dbReference type="ChEBI" id="CHEBI:15378"/>
        <dbReference type="ChEBI" id="CHEBI:17996"/>
    </reaction>
</comment>
<comment type="subunit">
    <text evidence="1">Homodimer.</text>
</comment>
<comment type="subcellular location">
    <subcellularLocation>
        <location evidence="1">Cell inner membrane</location>
        <topology evidence="1">Multi-pass membrane protein</topology>
    </subcellularLocation>
</comment>
<comment type="similarity">
    <text evidence="1">Belongs to the chloride channel (TC 2.A.49) family. ClcA subfamily.</text>
</comment>
<protein>
    <recommendedName>
        <fullName evidence="1">H(+)/Cl(-) exchange transporter ClcA</fullName>
    </recommendedName>
</protein>
<evidence type="ECO:0000255" key="1">
    <source>
        <dbReference type="HAMAP-Rule" id="MF_01128"/>
    </source>
</evidence>
<reference key="1">
    <citation type="journal article" date="2005" name="Nucleic Acids Res.">
        <title>Genome dynamics and diversity of Shigella species, the etiologic agents of bacillary dysentery.</title>
        <authorList>
            <person name="Yang F."/>
            <person name="Yang J."/>
            <person name="Zhang X."/>
            <person name="Chen L."/>
            <person name="Jiang Y."/>
            <person name="Yan Y."/>
            <person name="Tang X."/>
            <person name="Wang J."/>
            <person name="Xiong Z."/>
            <person name="Dong J."/>
            <person name="Xue Y."/>
            <person name="Zhu Y."/>
            <person name="Xu X."/>
            <person name="Sun L."/>
            <person name="Chen S."/>
            <person name="Nie H."/>
            <person name="Peng J."/>
            <person name="Xu J."/>
            <person name="Wang Y."/>
            <person name="Yuan Z."/>
            <person name="Wen Y."/>
            <person name="Yao Z."/>
            <person name="Shen Y."/>
            <person name="Qiang B."/>
            <person name="Hou Y."/>
            <person name="Yu J."/>
            <person name="Jin Q."/>
        </authorList>
    </citation>
    <scope>NUCLEOTIDE SEQUENCE [LARGE SCALE GENOMIC DNA]</scope>
    <source>
        <strain>Sb227</strain>
    </source>
</reference>